<gene>
    <name evidence="1" type="primary">clpP1</name>
    <name type="ordered locus">TWT_480</name>
</gene>
<evidence type="ECO:0000255" key="1">
    <source>
        <dbReference type="HAMAP-Rule" id="MF_00444"/>
    </source>
</evidence>
<reference key="1">
    <citation type="journal article" date="2003" name="Genome Res.">
        <title>Tropheryma whipplei twist: a human pathogenic Actinobacteria with a reduced genome.</title>
        <authorList>
            <person name="Raoult D."/>
            <person name="Ogata H."/>
            <person name="Audic S."/>
            <person name="Robert C."/>
            <person name="Suhre K."/>
            <person name="Drancourt M."/>
            <person name="Claverie J.-M."/>
        </authorList>
    </citation>
    <scope>NUCLEOTIDE SEQUENCE [LARGE SCALE GENOMIC DNA]</scope>
    <source>
        <strain>Twist</strain>
    </source>
</reference>
<protein>
    <recommendedName>
        <fullName evidence="1">ATP-dependent Clp protease proteolytic subunit 1</fullName>
        <ecNumber evidence="1">3.4.21.92</ecNumber>
    </recommendedName>
    <alternativeName>
        <fullName evidence="1">Endopeptidase Clp 1</fullName>
    </alternativeName>
</protein>
<organism>
    <name type="scientific">Tropheryma whipplei (strain Twist)</name>
    <name type="common">Whipple's bacillus</name>
    <dbReference type="NCBI Taxonomy" id="203267"/>
    <lineage>
        <taxon>Bacteria</taxon>
        <taxon>Bacillati</taxon>
        <taxon>Actinomycetota</taxon>
        <taxon>Actinomycetes</taxon>
        <taxon>Micrococcales</taxon>
        <taxon>Tropherymataceae</taxon>
        <taxon>Tropheryma</taxon>
    </lineage>
</organism>
<comment type="function">
    <text evidence="1">Cleaves peptides in various proteins in a process that requires ATP hydrolysis. Has a chymotrypsin-like activity. Plays a major role in the degradation of misfolded proteins.</text>
</comment>
<comment type="catalytic activity">
    <reaction evidence="1">
        <text>Hydrolysis of proteins to small peptides in the presence of ATP and magnesium. alpha-casein is the usual test substrate. In the absence of ATP, only oligopeptides shorter than five residues are hydrolyzed (such as succinyl-Leu-Tyr-|-NHMec, and Leu-Tyr-Leu-|-Tyr-Trp, in which cleavage of the -Tyr-|-Leu- and -Tyr-|-Trp bonds also occurs).</text>
        <dbReference type="EC" id="3.4.21.92"/>
    </reaction>
</comment>
<comment type="subunit">
    <text evidence="1">Fourteen ClpP subunits assemble into 2 heptameric rings which stack back to back to give a disk-like structure with a central cavity, resembling the structure of eukaryotic proteasomes.</text>
</comment>
<comment type="subcellular location">
    <subcellularLocation>
        <location evidence="1">Cytoplasm</location>
    </subcellularLocation>
</comment>
<comment type="similarity">
    <text evidence="1">Belongs to the peptidase S14 family.</text>
</comment>
<sequence>MYPNSRYILPSLDERTAYGYKQVDPYTKLFEDRIVFLGVQIDDASADDVMAQLLVLEGQDAERDIIMYINSPGGSFTAMTAIYDTMQYIRPQIQTVCLGQAASAAAVILSAGTPGKRLALPNARILIHQPVVASSGYGQASDIEIQAREIMRMREWLEKTLAQHSNKSVKQVSKDIDRDKILSSEQALEYGLIDQILVSRKAGLGKK</sequence>
<keyword id="KW-0963">Cytoplasm</keyword>
<keyword id="KW-0378">Hydrolase</keyword>
<keyword id="KW-0645">Protease</keyword>
<keyword id="KW-1185">Reference proteome</keyword>
<keyword id="KW-0720">Serine protease</keyword>
<accession>Q83G49</accession>
<name>CLPP1_TROWT</name>
<dbReference type="EC" id="3.4.21.92" evidence="1"/>
<dbReference type="EMBL" id="AE014184">
    <property type="protein sequence ID" value="AAO44577.1"/>
    <property type="molecule type" value="Genomic_DNA"/>
</dbReference>
<dbReference type="RefSeq" id="WP_011096238.1">
    <property type="nucleotide sequence ID" value="NC_004572.3"/>
</dbReference>
<dbReference type="SMR" id="Q83G49"/>
<dbReference type="STRING" id="203267.TWT_480"/>
<dbReference type="MEROPS" id="S14.009"/>
<dbReference type="KEGG" id="twh:TWT_480"/>
<dbReference type="eggNOG" id="COG0740">
    <property type="taxonomic scope" value="Bacteria"/>
</dbReference>
<dbReference type="HOGENOM" id="CLU_058707_3_2_11"/>
<dbReference type="OrthoDB" id="9802800at2"/>
<dbReference type="Proteomes" id="UP000002200">
    <property type="component" value="Chromosome"/>
</dbReference>
<dbReference type="GO" id="GO:0005737">
    <property type="term" value="C:cytoplasm"/>
    <property type="evidence" value="ECO:0007669"/>
    <property type="project" value="UniProtKB-SubCell"/>
</dbReference>
<dbReference type="GO" id="GO:0009368">
    <property type="term" value="C:endopeptidase Clp complex"/>
    <property type="evidence" value="ECO:0007669"/>
    <property type="project" value="TreeGrafter"/>
</dbReference>
<dbReference type="GO" id="GO:0004176">
    <property type="term" value="F:ATP-dependent peptidase activity"/>
    <property type="evidence" value="ECO:0007669"/>
    <property type="project" value="InterPro"/>
</dbReference>
<dbReference type="GO" id="GO:0051117">
    <property type="term" value="F:ATPase binding"/>
    <property type="evidence" value="ECO:0007669"/>
    <property type="project" value="TreeGrafter"/>
</dbReference>
<dbReference type="GO" id="GO:0004252">
    <property type="term" value="F:serine-type endopeptidase activity"/>
    <property type="evidence" value="ECO:0007669"/>
    <property type="project" value="UniProtKB-UniRule"/>
</dbReference>
<dbReference type="GO" id="GO:0006515">
    <property type="term" value="P:protein quality control for misfolded or incompletely synthesized proteins"/>
    <property type="evidence" value="ECO:0007669"/>
    <property type="project" value="TreeGrafter"/>
</dbReference>
<dbReference type="CDD" id="cd07017">
    <property type="entry name" value="S14_ClpP_2"/>
    <property type="match status" value="1"/>
</dbReference>
<dbReference type="FunFam" id="3.90.226.10:FF:000002">
    <property type="entry name" value="ATP-dependent Clp protease proteolytic subunit"/>
    <property type="match status" value="1"/>
</dbReference>
<dbReference type="Gene3D" id="3.90.226.10">
    <property type="entry name" value="2-enoyl-CoA Hydratase, Chain A, domain 1"/>
    <property type="match status" value="1"/>
</dbReference>
<dbReference type="HAMAP" id="MF_00444">
    <property type="entry name" value="ClpP"/>
    <property type="match status" value="1"/>
</dbReference>
<dbReference type="InterPro" id="IPR001907">
    <property type="entry name" value="ClpP"/>
</dbReference>
<dbReference type="InterPro" id="IPR029045">
    <property type="entry name" value="ClpP/crotonase-like_dom_sf"/>
</dbReference>
<dbReference type="InterPro" id="IPR023562">
    <property type="entry name" value="ClpP/TepA"/>
</dbReference>
<dbReference type="InterPro" id="IPR033135">
    <property type="entry name" value="ClpP_His_AS"/>
</dbReference>
<dbReference type="InterPro" id="IPR018215">
    <property type="entry name" value="ClpP_Ser_AS"/>
</dbReference>
<dbReference type="NCBIfam" id="NF001368">
    <property type="entry name" value="PRK00277.1"/>
    <property type="match status" value="1"/>
</dbReference>
<dbReference type="NCBIfam" id="NF009205">
    <property type="entry name" value="PRK12553.1"/>
    <property type="match status" value="1"/>
</dbReference>
<dbReference type="PANTHER" id="PTHR10381">
    <property type="entry name" value="ATP-DEPENDENT CLP PROTEASE PROTEOLYTIC SUBUNIT"/>
    <property type="match status" value="1"/>
</dbReference>
<dbReference type="PANTHER" id="PTHR10381:SF26">
    <property type="entry name" value="ATP-DEPENDENT CLP PROTEASE PROTEOLYTIC SUBUNIT-LIKE-RELATED"/>
    <property type="match status" value="1"/>
</dbReference>
<dbReference type="Pfam" id="PF00574">
    <property type="entry name" value="CLP_protease"/>
    <property type="match status" value="1"/>
</dbReference>
<dbReference type="PRINTS" id="PR00127">
    <property type="entry name" value="CLPPROTEASEP"/>
</dbReference>
<dbReference type="SUPFAM" id="SSF52096">
    <property type="entry name" value="ClpP/crotonase"/>
    <property type="match status" value="1"/>
</dbReference>
<dbReference type="PROSITE" id="PS00382">
    <property type="entry name" value="CLP_PROTEASE_HIS"/>
    <property type="match status" value="1"/>
</dbReference>
<dbReference type="PROSITE" id="PS00381">
    <property type="entry name" value="CLP_PROTEASE_SER"/>
    <property type="match status" value="1"/>
</dbReference>
<feature type="chain" id="PRO_0000179708" description="ATP-dependent Clp protease proteolytic subunit 1">
    <location>
        <begin position="1"/>
        <end position="207"/>
    </location>
</feature>
<feature type="active site" description="Nucleophile" evidence="1">
    <location>
        <position position="103"/>
    </location>
</feature>
<feature type="active site" evidence="1">
    <location>
        <position position="128"/>
    </location>
</feature>
<proteinExistence type="inferred from homology"/>